<gene>
    <name type="primary">repA1</name>
    <name type="ordered locus">BUpL01</name>
</gene>
<keyword id="KW-0235">DNA replication</keyword>
<keyword id="KW-0614">Plasmid</keyword>
<keyword id="KW-0615">Plasmid copy control</keyword>
<keyword id="KW-1185">Reference proteome</keyword>
<name>REPA1_BUCAI</name>
<dbReference type="EMBL" id="AJ006878">
    <property type="protein sequence ID" value="CAB56190.1"/>
    <property type="molecule type" value="Genomic_DNA"/>
</dbReference>
<dbReference type="EMBL" id="AP001071">
    <property type="protein sequence ID" value="BAA95420.1"/>
    <property type="molecule type" value="Genomic_DNA"/>
</dbReference>
<dbReference type="RefSeq" id="NP_057965.1">
    <property type="nucleotide sequence ID" value="NC_002253.1"/>
</dbReference>
<dbReference type="RefSeq" id="WP_010892291.1">
    <property type="nucleotide sequence ID" value="NC_002253.1"/>
</dbReference>
<dbReference type="EnsemblBacteria" id="BAA95420">
    <property type="protein sequence ID" value="BAA95420"/>
    <property type="gene ID" value="BAA95420"/>
</dbReference>
<dbReference type="KEGG" id="buc:BUpL01"/>
<dbReference type="PATRIC" id="fig|107806.10.peg.7"/>
<dbReference type="HOGENOM" id="CLU_084990_0_0_6"/>
<dbReference type="Proteomes" id="UP000001806">
    <property type="component" value="Plasmid pLeu"/>
</dbReference>
<dbReference type="GO" id="GO:0006260">
    <property type="term" value="P:DNA replication"/>
    <property type="evidence" value="ECO:0007669"/>
    <property type="project" value="UniProtKB-KW"/>
</dbReference>
<dbReference type="GO" id="GO:0006276">
    <property type="term" value="P:plasmid maintenance"/>
    <property type="evidence" value="ECO:0007669"/>
    <property type="project" value="UniProtKB-KW"/>
</dbReference>
<dbReference type="InterPro" id="IPR003446">
    <property type="entry name" value="Plasmid_replication_init_RepA"/>
</dbReference>
<dbReference type="NCBIfam" id="NF040977">
    <property type="entry name" value="RepA_IncFII_LM"/>
    <property type="match status" value="1"/>
</dbReference>
<dbReference type="Pfam" id="PF02387">
    <property type="entry name" value="IncFII_repA"/>
    <property type="match status" value="1"/>
</dbReference>
<evidence type="ECO:0000250" key="1"/>
<evidence type="ECO:0000305" key="2"/>
<reference key="1">
    <citation type="journal article" date="2000" name="Curr. Microbiol.">
        <title>Molecular characterization of the Leucine plasmid from Buchnera aphidicola, primary endosymbiont of the aphid Acyrthosiphon pisum.</title>
        <authorList>
            <person name="Soler T."/>
            <person name="Latorre A."/>
            <person name="Sabater B."/>
            <person name="Silva F.J."/>
        </authorList>
    </citation>
    <scope>NUCLEOTIDE SEQUENCE [GENOMIC DNA]</scope>
</reference>
<reference key="2">
    <citation type="journal article" date="2000" name="Nature">
        <title>Genome sequence of the endocellular bacterial symbiont of aphids Buchnera sp. APS.</title>
        <authorList>
            <person name="Shigenobu S."/>
            <person name="Watanabe H."/>
            <person name="Hattori M."/>
            <person name="Sakaki Y."/>
            <person name="Ishikawa H."/>
        </authorList>
    </citation>
    <scope>NUCLEOTIDE SEQUENCE [LARGE SCALE GENOMIC DNA]</scope>
    <source>
        <strain>APS</strain>
    </source>
</reference>
<protein>
    <recommendedName>
        <fullName>Probable replication-associated protein repA1</fullName>
    </recommendedName>
</protein>
<proteinExistence type="inferred from homology"/>
<sequence>MIIRKCYINNPNPFFTPPKNNKRRPSFICYAMKRASEIDVARCELNYILQIKNIKIGFPVKRFRRLNEHRACAMRAMVLAMLYHFNISSDLVQASVEQLSDECGLSTLSKAGNKSITRASRLITNFMEPMGFVTCKKTWDKILGNYMPKMITLTPLFFMLFGVSEKKLMDAKKQQLGWINKNLISKGFKPITMIDAKRRSKDTQIKNIFQYRISKHAFYKKKRNAQRLISLDEKEARQTILRALVAKYSITELTKLGPNGLKKQVNISYYYLRKIATNTYPDN</sequence>
<accession>P56936</accession>
<accession>Q9R6R5</accession>
<organism>
    <name type="scientific">Buchnera aphidicola subsp. Acyrthosiphon pisum (strain APS)</name>
    <name type="common">Acyrthosiphon pisum symbiotic bacterium</name>
    <dbReference type="NCBI Taxonomy" id="107806"/>
    <lineage>
        <taxon>Bacteria</taxon>
        <taxon>Pseudomonadati</taxon>
        <taxon>Pseudomonadota</taxon>
        <taxon>Gammaproteobacteria</taxon>
        <taxon>Enterobacterales</taxon>
        <taxon>Erwiniaceae</taxon>
        <taxon>Buchnera</taxon>
    </lineage>
</organism>
<geneLocation type="plasmid">
    <name>pLeu</name>
    <name>pBAp1</name>
</geneLocation>
<comment type="function">
    <text evidence="1">This protein is essential for plasmid replication; it is involved in copy control functions.</text>
</comment>
<comment type="similarity">
    <text evidence="2">Belongs to the IncFII RepA family.</text>
</comment>
<feature type="chain" id="PRO_0000216227" description="Probable replication-associated protein repA1">
    <location>
        <begin position="1"/>
        <end position="283"/>
    </location>
</feature>